<proteinExistence type="inferred from homology"/>
<dbReference type="EMBL" id="CP001628">
    <property type="protein sequence ID" value="ACS30207.1"/>
    <property type="molecule type" value="Genomic_DNA"/>
</dbReference>
<dbReference type="RefSeq" id="WP_010079157.1">
    <property type="nucleotide sequence ID" value="NZ_WBMF01000055.1"/>
</dbReference>
<dbReference type="SMR" id="C5C9Q5"/>
<dbReference type="STRING" id="465515.Mlut_06750"/>
<dbReference type="EnsemblBacteria" id="ACS30207">
    <property type="protein sequence ID" value="ACS30207"/>
    <property type="gene ID" value="Mlut_06750"/>
</dbReference>
<dbReference type="GeneID" id="93344840"/>
<dbReference type="KEGG" id="mlu:Mlut_06750"/>
<dbReference type="eggNOG" id="COG0264">
    <property type="taxonomic scope" value="Bacteria"/>
</dbReference>
<dbReference type="HOGENOM" id="CLU_047155_0_0_11"/>
<dbReference type="Proteomes" id="UP000000738">
    <property type="component" value="Chromosome"/>
</dbReference>
<dbReference type="GO" id="GO:0005737">
    <property type="term" value="C:cytoplasm"/>
    <property type="evidence" value="ECO:0007669"/>
    <property type="project" value="UniProtKB-SubCell"/>
</dbReference>
<dbReference type="GO" id="GO:0003746">
    <property type="term" value="F:translation elongation factor activity"/>
    <property type="evidence" value="ECO:0007669"/>
    <property type="project" value="UniProtKB-UniRule"/>
</dbReference>
<dbReference type="CDD" id="cd14275">
    <property type="entry name" value="UBA_EF-Ts"/>
    <property type="match status" value="1"/>
</dbReference>
<dbReference type="FunFam" id="1.10.286.20:FF:000001">
    <property type="entry name" value="Elongation factor Ts"/>
    <property type="match status" value="1"/>
</dbReference>
<dbReference type="FunFam" id="1.10.8.10:FF:000001">
    <property type="entry name" value="Elongation factor Ts"/>
    <property type="match status" value="1"/>
</dbReference>
<dbReference type="Gene3D" id="1.10.286.20">
    <property type="match status" value="1"/>
</dbReference>
<dbReference type="Gene3D" id="1.10.8.10">
    <property type="entry name" value="DNA helicase RuvA subunit, C-terminal domain"/>
    <property type="match status" value="1"/>
</dbReference>
<dbReference type="Gene3D" id="3.30.479.20">
    <property type="entry name" value="Elongation factor Ts, dimerisation domain"/>
    <property type="match status" value="2"/>
</dbReference>
<dbReference type="HAMAP" id="MF_00050">
    <property type="entry name" value="EF_Ts"/>
    <property type="match status" value="1"/>
</dbReference>
<dbReference type="InterPro" id="IPR036402">
    <property type="entry name" value="EF-Ts_dimer_sf"/>
</dbReference>
<dbReference type="InterPro" id="IPR001816">
    <property type="entry name" value="Transl_elong_EFTs/EF1B"/>
</dbReference>
<dbReference type="InterPro" id="IPR014039">
    <property type="entry name" value="Transl_elong_EFTs/EF1B_dimer"/>
</dbReference>
<dbReference type="InterPro" id="IPR018101">
    <property type="entry name" value="Transl_elong_Ts_CS"/>
</dbReference>
<dbReference type="InterPro" id="IPR009060">
    <property type="entry name" value="UBA-like_sf"/>
</dbReference>
<dbReference type="NCBIfam" id="TIGR00116">
    <property type="entry name" value="tsf"/>
    <property type="match status" value="1"/>
</dbReference>
<dbReference type="PANTHER" id="PTHR11741">
    <property type="entry name" value="ELONGATION FACTOR TS"/>
    <property type="match status" value="1"/>
</dbReference>
<dbReference type="PANTHER" id="PTHR11741:SF0">
    <property type="entry name" value="ELONGATION FACTOR TS, MITOCHONDRIAL"/>
    <property type="match status" value="1"/>
</dbReference>
<dbReference type="Pfam" id="PF00889">
    <property type="entry name" value="EF_TS"/>
    <property type="match status" value="1"/>
</dbReference>
<dbReference type="SUPFAM" id="SSF54713">
    <property type="entry name" value="Elongation factor Ts (EF-Ts), dimerisation domain"/>
    <property type="match status" value="1"/>
</dbReference>
<dbReference type="SUPFAM" id="SSF46934">
    <property type="entry name" value="UBA-like"/>
    <property type="match status" value="1"/>
</dbReference>
<dbReference type="PROSITE" id="PS01126">
    <property type="entry name" value="EF_TS_1"/>
    <property type="match status" value="1"/>
</dbReference>
<dbReference type="PROSITE" id="PS01127">
    <property type="entry name" value="EF_TS_2"/>
    <property type="match status" value="1"/>
</dbReference>
<gene>
    <name evidence="1" type="primary">tsf</name>
    <name type="ordered locus">Mlut_06750</name>
</gene>
<organism>
    <name type="scientific">Micrococcus luteus (strain ATCC 4698 / DSM 20030 / JCM 1464 / CCM 169 / CCUG 5858 / IAM 1056 / NBRC 3333 / NCIMB 9278 / NCTC 2665 / VKM Ac-2230)</name>
    <name type="common">Micrococcus lysodeikticus</name>
    <dbReference type="NCBI Taxonomy" id="465515"/>
    <lineage>
        <taxon>Bacteria</taxon>
        <taxon>Bacillati</taxon>
        <taxon>Actinomycetota</taxon>
        <taxon>Actinomycetes</taxon>
        <taxon>Micrococcales</taxon>
        <taxon>Micrococcaceae</taxon>
        <taxon>Micrococcus</taxon>
    </lineage>
</organism>
<name>EFTS_MICLC</name>
<protein>
    <recommendedName>
        <fullName evidence="1">Elongation factor Ts</fullName>
        <shortName evidence="1">EF-Ts</shortName>
    </recommendedName>
</protein>
<sequence length="278" mass="29407">MANYTAADIKALRERTGAGMMDVKKALDEADGDAEKAIEIIRVKGLKGATKREGRSAAEGLVAATVENGVGVMIELNCETDFVAKADKFIALGDVVLRAAVASGATDVDGLLASDYEGRTLGDYVTEEGALLGEKVAVRRLARVEGAFVDAYLHKTSKDLPAQVGVLLAVDADSADAKTAAHDIAVHTAAYSPTYLTREDVPAETVENERRIADETARAEGKPEQALPKIVEGRLTGFFKEIVLVDQPFAKDPKQTVGKVASDAGTNVTGFARFRVGN</sequence>
<reference key="1">
    <citation type="journal article" date="2010" name="J. Bacteriol.">
        <title>Genome sequence of the Fleming strain of Micrococcus luteus, a simple free-living actinobacterium.</title>
        <authorList>
            <person name="Young M."/>
            <person name="Artsatbanov V."/>
            <person name="Beller H.R."/>
            <person name="Chandra G."/>
            <person name="Chater K.F."/>
            <person name="Dover L.G."/>
            <person name="Goh E.B."/>
            <person name="Kahan T."/>
            <person name="Kaprelyants A.S."/>
            <person name="Kyrpides N."/>
            <person name="Lapidus A."/>
            <person name="Lowry S.R."/>
            <person name="Lykidis A."/>
            <person name="Mahillon J."/>
            <person name="Markowitz V."/>
            <person name="Mavromatis K."/>
            <person name="Mukamolova G.V."/>
            <person name="Oren A."/>
            <person name="Rokem J.S."/>
            <person name="Smith M.C."/>
            <person name="Young D.I."/>
            <person name="Greenblatt C.L."/>
        </authorList>
    </citation>
    <scope>NUCLEOTIDE SEQUENCE [LARGE SCALE GENOMIC DNA]</scope>
    <source>
        <strain>ATCC 4698 / DSM 20030 / JCM 1464 / CCM 169 / CCUG 5858 / IAM 1056 / NBRC 3333 / NCIMB 9278 / NCTC 2665 / VKM Ac-2230</strain>
    </source>
</reference>
<keyword id="KW-0963">Cytoplasm</keyword>
<keyword id="KW-0251">Elongation factor</keyword>
<keyword id="KW-0648">Protein biosynthesis</keyword>
<keyword id="KW-1185">Reference proteome</keyword>
<evidence type="ECO:0000255" key="1">
    <source>
        <dbReference type="HAMAP-Rule" id="MF_00050"/>
    </source>
</evidence>
<comment type="function">
    <text evidence="1">Associates with the EF-Tu.GDP complex and induces the exchange of GDP to GTP. It remains bound to the aminoacyl-tRNA.EF-Tu.GTP complex up to the GTP hydrolysis stage on the ribosome.</text>
</comment>
<comment type="subcellular location">
    <subcellularLocation>
        <location evidence="1">Cytoplasm</location>
    </subcellularLocation>
</comment>
<comment type="similarity">
    <text evidence="1">Belongs to the EF-Ts family.</text>
</comment>
<accession>C5C9Q5</accession>
<feature type="chain" id="PRO_1000202247" description="Elongation factor Ts">
    <location>
        <begin position="1"/>
        <end position="278"/>
    </location>
</feature>
<feature type="region of interest" description="Involved in Mg(2+) ion dislocation from EF-Tu" evidence="1">
    <location>
        <begin position="80"/>
        <end position="83"/>
    </location>
</feature>